<proteinExistence type="inferred from homology"/>
<dbReference type="EMBL" id="CP000240">
    <property type="protein sequence ID" value="ABD01899.1"/>
    <property type="molecule type" value="Genomic_DNA"/>
</dbReference>
<dbReference type="RefSeq" id="WP_011432555.1">
    <property type="nucleotide sequence ID" value="NC_007776.1"/>
</dbReference>
<dbReference type="SMR" id="Q2JMX8"/>
<dbReference type="STRING" id="321332.CYB_0920"/>
<dbReference type="KEGG" id="cyb:CYB_0920"/>
<dbReference type="eggNOG" id="COG0480">
    <property type="taxonomic scope" value="Bacteria"/>
</dbReference>
<dbReference type="HOGENOM" id="CLU_002794_4_1_3"/>
<dbReference type="OrthoDB" id="580826at2"/>
<dbReference type="Proteomes" id="UP000001938">
    <property type="component" value="Chromosome"/>
</dbReference>
<dbReference type="GO" id="GO:0005737">
    <property type="term" value="C:cytoplasm"/>
    <property type="evidence" value="ECO:0007669"/>
    <property type="project" value="UniProtKB-SubCell"/>
</dbReference>
<dbReference type="GO" id="GO:0005525">
    <property type="term" value="F:GTP binding"/>
    <property type="evidence" value="ECO:0007669"/>
    <property type="project" value="UniProtKB-UniRule"/>
</dbReference>
<dbReference type="GO" id="GO:0003924">
    <property type="term" value="F:GTPase activity"/>
    <property type="evidence" value="ECO:0007669"/>
    <property type="project" value="InterPro"/>
</dbReference>
<dbReference type="GO" id="GO:0003746">
    <property type="term" value="F:translation elongation factor activity"/>
    <property type="evidence" value="ECO:0007669"/>
    <property type="project" value="UniProtKB-UniRule"/>
</dbReference>
<dbReference type="GO" id="GO:0032790">
    <property type="term" value="P:ribosome disassembly"/>
    <property type="evidence" value="ECO:0007669"/>
    <property type="project" value="TreeGrafter"/>
</dbReference>
<dbReference type="CDD" id="cd01886">
    <property type="entry name" value="EF-G"/>
    <property type="match status" value="1"/>
</dbReference>
<dbReference type="CDD" id="cd16262">
    <property type="entry name" value="EFG_III"/>
    <property type="match status" value="1"/>
</dbReference>
<dbReference type="CDD" id="cd01434">
    <property type="entry name" value="EFG_mtEFG1_IV"/>
    <property type="match status" value="1"/>
</dbReference>
<dbReference type="CDD" id="cd03713">
    <property type="entry name" value="EFG_mtEFG_C"/>
    <property type="match status" value="1"/>
</dbReference>
<dbReference type="CDD" id="cd04088">
    <property type="entry name" value="EFG_mtEFG_II"/>
    <property type="match status" value="1"/>
</dbReference>
<dbReference type="FunFam" id="2.40.30.10:FF:000006">
    <property type="entry name" value="Elongation factor G"/>
    <property type="match status" value="1"/>
</dbReference>
<dbReference type="FunFam" id="3.30.230.10:FF:000003">
    <property type="entry name" value="Elongation factor G"/>
    <property type="match status" value="1"/>
</dbReference>
<dbReference type="FunFam" id="3.30.70.240:FF:000001">
    <property type="entry name" value="Elongation factor G"/>
    <property type="match status" value="1"/>
</dbReference>
<dbReference type="FunFam" id="3.30.70.870:FF:000001">
    <property type="entry name" value="Elongation factor G"/>
    <property type="match status" value="1"/>
</dbReference>
<dbReference type="FunFam" id="3.40.50.300:FF:000029">
    <property type="entry name" value="Elongation factor G"/>
    <property type="match status" value="1"/>
</dbReference>
<dbReference type="Gene3D" id="3.30.230.10">
    <property type="match status" value="1"/>
</dbReference>
<dbReference type="Gene3D" id="3.30.70.240">
    <property type="match status" value="1"/>
</dbReference>
<dbReference type="Gene3D" id="3.30.70.870">
    <property type="entry name" value="Elongation Factor G (Translational Gtpase), domain 3"/>
    <property type="match status" value="1"/>
</dbReference>
<dbReference type="Gene3D" id="3.40.50.300">
    <property type="entry name" value="P-loop containing nucleotide triphosphate hydrolases"/>
    <property type="match status" value="1"/>
</dbReference>
<dbReference type="Gene3D" id="2.40.30.10">
    <property type="entry name" value="Translation factors"/>
    <property type="match status" value="1"/>
</dbReference>
<dbReference type="HAMAP" id="MF_00054_B">
    <property type="entry name" value="EF_G_EF_2_B"/>
    <property type="match status" value="1"/>
</dbReference>
<dbReference type="InterPro" id="IPR041095">
    <property type="entry name" value="EFG_II"/>
</dbReference>
<dbReference type="InterPro" id="IPR009022">
    <property type="entry name" value="EFG_III"/>
</dbReference>
<dbReference type="InterPro" id="IPR035647">
    <property type="entry name" value="EFG_III/V"/>
</dbReference>
<dbReference type="InterPro" id="IPR047872">
    <property type="entry name" value="EFG_IV"/>
</dbReference>
<dbReference type="InterPro" id="IPR035649">
    <property type="entry name" value="EFG_V"/>
</dbReference>
<dbReference type="InterPro" id="IPR000640">
    <property type="entry name" value="EFG_V-like"/>
</dbReference>
<dbReference type="InterPro" id="IPR004161">
    <property type="entry name" value="EFTu-like_2"/>
</dbReference>
<dbReference type="InterPro" id="IPR031157">
    <property type="entry name" value="G_TR_CS"/>
</dbReference>
<dbReference type="InterPro" id="IPR027417">
    <property type="entry name" value="P-loop_NTPase"/>
</dbReference>
<dbReference type="InterPro" id="IPR020568">
    <property type="entry name" value="Ribosomal_Su5_D2-typ_SF"/>
</dbReference>
<dbReference type="InterPro" id="IPR014721">
    <property type="entry name" value="Ribsml_uS5_D2-typ_fold_subgr"/>
</dbReference>
<dbReference type="InterPro" id="IPR005225">
    <property type="entry name" value="Small_GTP-bd"/>
</dbReference>
<dbReference type="InterPro" id="IPR000795">
    <property type="entry name" value="T_Tr_GTP-bd_dom"/>
</dbReference>
<dbReference type="InterPro" id="IPR009000">
    <property type="entry name" value="Transl_B-barrel_sf"/>
</dbReference>
<dbReference type="InterPro" id="IPR004540">
    <property type="entry name" value="Transl_elong_EFG/EF2"/>
</dbReference>
<dbReference type="InterPro" id="IPR005517">
    <property type="entry name" value="Transl_elong_EFG/EF2_IV"/>
</dbReference>
<dbReference type="NCBIfam" id="TIGR00484">
    <property type="entry name" value="EF-G"/>
    <property type="match status" value="1"/>
</dbReference>
<dbReference type="NCBIfam" id="NF009381">
    <property type="entry name" value="PRK12740.1-5"/>
    <property type="match status" value="1"/>
</dbReference>
<dbReference type="NCBIfam" id="TIGR00231">
    <property type="entry name" value="small_GTP"/>
    <property type="match status" value="1"/>
</dbReference>
<dbReference type="PANTHER" id="PTHR43261:SF1">
    <property type="entry name" value="RIBOSOME-RELEASING FACTOR 2, MITOCHONDRIAL"/>
    <property type="match status" value="1"/>
</dbReference>
<dbReference type="PANTHER" id="PTHR43261">
    <property type="entry name" value="TRANSLATION ELONGATION FACTOR G-RELATED"/>
    <property type="match status" value="1"/>
</dbReference>
<dbReference type="Pfam" id="PF00679">
    <property type="entry name" value="EFG_C"/>
    <property type="match status" value="1"/>
</dbReference>
<dbReference type="Pfam" id="PF14492">
    <property type="entry name" value="EFG_III"/>
    <property type="match status" value="1"/>
</dbReference>
<dbReference type="Pfam" id="PF03764">
    <property type="entry name" value="EFG_IV"/>
    <property type="match status" value="1"/>
</dbReference>
<dbReference type="Pfam" id="PF00009">
    <property type="entry name" value="GTP_EFTU"/>
    <property type="match status" value="1"/>
</dbReference>
<dbReference type="Pfam" id="PF03144">
    <property type="entry name" value="GTP_EFTU_D2"/>
    <property type="match status" value="1"/>
</dbReference>
<dbReference type="PRINTS" id="PR00315">
    <property type="entry name" value="ELONGATNFCT"/>
</dbReference>
<dbReference type="SMART" id="SM00838">
    <property type="entry name" value="EFG_C"/>
    <property type="match status" value="1"/>
</dbReference>
<dbReference type="SMART" id="SM00889">
    <property type="entry name" value="EFG_IV"/>
    <property type="match status" value="1"/>
</dbReference>
<dbReference type="SUPFAM" id="SSF54980">
    <property type="entry name" value="EF-G C-terminal domain-like"/>
    <property type="match status" value="2"/>
</dbReference>
<dbReference type="SUPFAM" id="SSF52540">
    <property type="entry name" value="P-loop containing nucleoside triphosphate hydrolases"/>
    <property type="match status" value="1"/>
</dbReference>
<dbReference type="SUPFAM" id="SSF54211">
    <property type="entry name" value="Ribosomal protein S5 domain 2-like"/>
    <property type="match status" value="1"/>
</dbReference>
<dbReference type="SUPFAM" id="SSF50447">
    <property type="entry name" value="Translation proteins"/>
    <property type="match status" value="1"/>
</dbReference>
<dbReference type="PROSITE" id="PS00301">
    <property type="entry name" value="G_TR_1"/>
    <property type="match status" value="1"/>
</dbReference>
<dbReference type="PROSITE" id="PS51722">
    <property type="entry name" value="G_TR_2"/>
    <property type="match status" value="1"/>
</dbReference>
<evidence type="ECO:0000255" key="1">
    <source>
        <dbReference type="HAMAP-Rule" id="MF_00054"/>
    </source>
</evidence>
<accession>Q2JMX8</accession>
<keyword id="KW-0963">Cytoplasm</keyword>
<keyword id="KW-0251">Elongation factor</keyword>
<keyword id="KW-0342">GTP-binding</keyword>
<keyword id="KW-0547">Nucleotide-binding</keyword>
<keyword id="KW-0648">Protein biosynthesis</keyword>
<keyword id="KW-1185">Reference proteome</keyword>
<feature type="chain" id="PRO_0000263523" description="Elongation factor G">
    <location>
        <begin position="1"/>
        <end position="707"/>
    </location>
</feature>
<feature type="domain" description="tr-type G">
    <location>
        <begin position="8"/>
        <end position="297"/>
    </location>
</feature>
<feature type="binding site" evidence="1">
    <location>
        <begin position="17"/>
        <end position="24"/>
    </location>
    <ligand>
        <name>GTP</name>
        <dbReference type="ChEBI" id="CHEBI:37565"/>
    </ligand>
</feature>
<feature type="binding site" evidence="1">
    <location>
        <begin position="96"/>
        <end position="100"/>
    </location>
    <ligand>
        <name>GTP</name>
        <dbReference type="ChEBI" id="CHEBI:37565"/>
    </ligand>
</feature>
<feature type="binding site" evidence="1">
    <location>
        <begin position="150"/>
        <end position="153"/>
    </location>
    <ligand>
        <name>GTP</name>
        <dbReference type="ChEBI" id="CHEBI:37565"/>
    </ligand>
</feature>
<gene>
    <name evidence="1" type="primary">fusA</name>
    <name type="ordered locus">CYB_0920</name>
</gene>
<organism>
    <name type="scientific">Synechococcus sp. (strain JA-2-3B'a(2-13))</name>
    <name type="common">Cyanobacteria bacterium Yellowstone B-Prime</name>
    <dbReference type="NCBI Taxonomy" id="321332"/>
    <lineage>
        <taxon>Bacteria</taxon>
        <taxon>Bacillati</taxon>
        <taxon>Cyanobacteriota</taxon>
        <taxon>Cyanophyceae</taxon>
        <taxon>Synechococcales</taxon>
        <taxon>Synechococcaceae</taxon>
        <taxon>Synechococcus</taxon>
    </lineage>
</organism>
<protein>
    <recommendedName>
        <fullName evidence="1">Elongation factor G</fullName>
        <shortName evidence="1">EF-G</shortName>
    </recommendedName>
</protein>
<comment type="function">
    <text evidence="1">Catalyzes the GTP-dependent ribosomal translocation step during translation elongation. During this step, the ribosome changes from the pre-translocational (PRE) to the post-translocational (POST) state as the newly formed A-site-bound peptidyl-tRNA and P-site-bound deacylated tRNA move to the P and E sites, respectively. Catalyzes the coordinated movement of the two tRNA molecules, the mRNA and conformational changes in the ribosome.</text>
</comment>
<comment type="subcellular location">
    <subcellularLocation>
        <location evidence="1">Cytoplasm</location>
    </subcellularLocation>
</comment>
<comment type="similarity">
    <text evidence="1">Belongs to the TRAFAC class translation factor GTPase superfamily. Classic translation factor GTPase family. EF-G/EF-2 subfamily.</text>
</comment>
<name>EFG_SYNJB</name>
<sequence length="707" mass="77451">MARTVPLERVRNIGIAAHIDAGKTTTTERILFYSGLVHKIGEVHDGTAVTDWMAQERERGITITAAAITTRWTKRDPANPSQPLSGAPEYTINIIDTPGHVDFTIEVERSMRVLDGVIAVFDSVGGVQPQSETVWRQANRYNVPRIAFVNKMDRMGANFLKVYNQIRERLKANAVPIQLPIGAEDGFCGIVDLVRMQARIYMDEIGKDIRPAPIPEEMKDLVAEYRAKLVEAVAETDEALMEKYFAEEDLSEADLMAGLRKGTISGQIVPMLCGSAFKNKGVQMLLDAVVDYLPSPVDIPAIKGVLPDGSEVSRRASDDEPFSALAFKLMSDKYGDLTFIRVYSGVLTKGTYVLNSTKNKKERISRLVVLKADERLDVDELRAGDLGAVVGLKDTTTGDTLCDENAPVILESLFIPEPVISVAVEPKTKADIDKLSKALQALAKEDPTFRVSVDPETNQTIISGMGELHLEILVDRMLREFNVEANVGNPQVAYRETIRKPVSRVEGKFVRQSGGRGQYGHVVIDLEPAEPGTGFEFVSKIVGGVVPKEYIGPAEQGIREACESGVLAGYPLIDIRATLVDGSYHEVDSSEMAFKIAGSMALKEAARRASPTLLEPMMKVEVEVPEAFVGDVIGDINARRGQMEGMNTEGGITKVNAKVPLAEMFGYATDIRSKTQGRGTFTMEFSHYEEVPRSIAEAIIAKNKGNE</sequence>
<reference key="1">
    <citation type="journal article" date="2007" name="ISME J.">
        <title>Population level functional diversity in a microbial community revealed by comparative genomic and metagenomic analyses.</title>
        <authorList>
            <person name="Bhaya D."/>
            <person name="Grossman A.R."/>
            <person name="Steunou A.-S."/>
            <person name="Khuri N."/>
            <person name="Cohan F.M."/>
            <person name="Hamamura N."/>
            <person name="Melendrez M.C."/>
            <person name="Bateson M.M."/>
            <person name="Ward D.M."/>
            <person name="Heidelberg J.F."/>
        </authorList>
    </citation>
    <scope>NUCLEOTIDE SEQUENCE [LARGE SCALE GENOMIC DNA]</scope>
    <source>
        <strain>JA-2-3B'a(2-13)</strain>
    </source>
</reference>